<gene>
    <name evidence="2" type="ordered locus">Psyr_2918</name>
</gene>
<keyword id="KW-0963">Cytoplasm</keyword>
<keyword id="KW-0520">NAD</keyword>
<keyword id="KW-0560">Oxidoreductase</keyword>
<protein>
    <recommendedName>
        <fullName evidence="1">L-carnitine dehydrogenase</fullName>
        <shortName evidence="1">CDH</shortName>
        <shortName evidence="1">L-CDH</shortName>
        <ecNumber evidence="1">1.1.1.108</ecNumber>
    </recommendedName>
</protein>
<proteinExistence type="inferred from homology"/>
<evidence type="ECO:0000255" key="1">
    <source>
        <dbReference type="HAMAP-Rule" id="MF_02129"/>
    </source>
</evidence>
<evidence type="ECO:0000312" key="2">
    <source>
        <dbReference type="EMBL" id="AAY37952.1"/>
    </source>
</evidence>
<accession>Q4ZSC0</accession>
<comment type="function">
    <text evidence="1">Catalyzes the NAD(+)-dependent oxidation of L-carnitine to 3-dehydrocarnitine.</text>
</comment>
<comment type="catalytic activity">
    <reaction evidence="1">
        <text>carnitine + NAD(+) = 3-dehydrocarnitine + NADH + H(+)</text>
        <dbReference type="Rhea" id="RHEA:19265"/>
        <dbReference type="ChEBI" id="CHEBI:15378"/>
        <dbReference type="ChEBI" id="CHEBI:17126"/>
        <dbReference type="ChEBI" id="CHEBI:57540"/>
        <dbReference type="ChEBI" id="CHEBI:57885"/>
        <dbReference type="ChEBI" id="CHEBI:57945"/>
        <dbReference type="EC" id="1.1.1.108"/>
    </reaction>
</comment>
<comment type="pathway">
    <text evidence="1">Amine and polyamine metabolism; carnitine metabolism.</text>
</comment>
<comment type="subunit">
    <text evidence="1">Homodimer.</text>
</comment>
<comment type="subcellular location">
    <subcellularLocation>
        <location evidence="1">Cytoplasm</location>
    </subcellularLocation>
</comment>
<comment type="similarity">
    <text evidence="1">Belongs to the 3-hydroxyacyl-CoA dehydrogenase family. L-carnitine dehydrogenase subfamily.</text>
</comment>
<dbReference type="EC" id="1.1.1.108" evidence="1"/>
<dbReference type="EMBL" id="CP000075">
    <property type="protein sequence ID" value="AAY37952.1"/>
    <property type="molecule type" value="Genomic_DNA"/>
</dbReference>
<dbReference type="RefSeq" id="WP_011268084.1">
    <property type="nucleotide sequence ID" value="NC_007005.1"/>
</dbReference>
<dbReference type="RefSeq" id="YP_235990.1">
    <property type="nucleotide sequence ID" value="NC_007005.1"/>
</dbReference>
<dbReference type="SMR" id="Q4ZSC0"/>
<dbReference type="STRING" id="205918.Psyr_2918"/>
<dbReference type="KEGG" id="psb:Psyr_2918"/>
<dbReference type="PATRIC" id="fig|205918.7.peg.2977"/>
<dbReference type="eggNOG" id="COG1250">
    <property type="taxonomic scope" value="Bacteria"/>
</dbReference>
<dbReference type="HOGENOM" id="CLU_009834_0_1_6"/>
<dbReference type="OrthoDB" id="9803287at2"/>
<dbReference type="UniPathway" id="UPA00117"/>
<dbReference type="Proteomes" id="UP000000426">
    <property type="component" value="Chromosome"/>
</dbReference>
<dbReference type="GO" id="GO:0005737">
    <property type="term" value="C:cytoplasm"/>
    <property type="evidence" value="ECO:0007669"/>
    <property type="project" value="UniProtKB-SubCell"/>
</dbReference>
<dbReference type="GO" id="GO:0047728">
    <property type="term" value="F:carnitine 3-dehydrogenase activity"/>
    <property type="evidence" value="ECO:0007669"/>
    <property type="project" value="UniProtKB-UniRule"/>
</dbReference>
<dbReference type="GO" id="GO:0070403">
    <property type="term" value="F:NAD+ binding"/>
    <property type="evidence" value="ECO:0007669"/>
    <property type="project" value="InterPro"/>
</dbReference>
<dbReference type="GO" id="GO:0009437">
    <property type="term" value="P:carnitine metabolic process"/>
    <property type="evidence" value="ECO:0007669"/>
    <property type="project" value="UniProtKB-UniRule"/>
</dbReference>
<dbReference type="GO" id="GO:0009056">
    <property type="term" value="P:catabolic process"/>
    <property type="evidence" value="ECO:0007669"/>
    <property type="project" value="UniProtKB-ARBA"/>
</dbReference>
<dbReference type="GO" id="GO:0006631">
    <property type="term" value="P:fatty acid metabolic process"/>
    <property type="evidence" value="ECO:0007669"/>
    <property type="project" value="InterPro"/>
</dbReference>
<dbReference type="FunFam" id="1.10.1040.10:FF:000027">
    <property type="entry name" value="L-carnitine dehydrogenase"/>
    <property type="match status" value="1"/>
</dbReference>
<dbReference type="FunFam" id="3.40.50.720:FF:000522">
    <property type="entry name" value="L-carnitine dehydrogenase"/>
    <property type="match status" value="1"/>
</dbReference>
<dbReference type="Gene3D" id="1.10.1040.10">
    <property type="entry name" value="N-(1-d-carboxylethyl)-l-norvaline Dehydrogenase, domain 2"/>
    <property type="match status" value="1"/>
</dbReference>
<dbReference type="Gene3D" id="3.40.50.720">
    <property type="entry name" value="NAD(P)-binding Rossmann-like Domain"/>
    <property type="match status" value="1"/>
</dbReference>
<dbReference type="HAMAP" id="MF_02129">
    <property type="entry name" value="L_carnitine_dehydrog"/>
    <property type="match status" value="1"/>
</dbReference>
<dbReference type="InterPro" id="IPR006176">
    <property type="entry name" value="3-OHacyl-CoA_DH_NAD-bd"/>
</dbReference>
<dbReference type="InterPro" id="IPR006108">
    <property type="entry name" value="3HC_DH_C"/>
</dbReference>
<dbReference type="InterPro" id="IPR008927">
    <property type="entry name" value="6-PGluconate_DH-like_C_sf"/>
</dbReference>
<dbReference type="InterPro" id="IPR013328">
    <property type="entry name" value="6PGD_dom2"/>
</dbReference>
<dbReference type="InterPro" id="IPR026578">
    <property type="entry name" value="L-carnitine_dehydrogenase"/>
</dbReference>
<dbReference type="InterPro" id="IPR036291">
    <property type="entry name" value="NAD(P)-bd_dom_sf"/>
</dbReference>
<dbReference type="NCBIfam" id="NF005471">
    <property type="entry name" value="PRK07066.1"/>
    <property type="match status" value="1"/>
</dbReference>
<dbReference type="PANTHER" id="PTHR48075">
    <property type="entry name" value="3-HYDROXYACYL-COA DEHYDROGENASE FAMILY PROTEIN"/>
    <property type="match status" value="1"/>
</dbReference>
<dbReference type="PANTHER" id="PTHR48075:SF5">
    <property type="entry name" value="3-HYDROXYBUTYRYL-COA DEHYDROGENASE"/>
    <property type="match status" value="1"/>
</dbReference>
<dbReference type="Pfam" id="PF00725">
    <property type="entry name" value="3HCDH"/>
    <property type="match status" value="1"/>
</dbReference>
<dbReference type="Pfam" id="PF02737">
    <property type="entry name" value="3HCDH_N"/>
    <property type="match status" value="1"/>
</dbReference>
<dbReference type="SUPFAM" id="SSF48179">
    <property type="entry name" value="6-phosphogluconate dehydrogenase C-terminal domain-like"/>
    <property type="match status" value="1"/>
</dbReference>
<dbReference type="SUPFAM" id="SSF51735">
    <property type="entry name" value="NAD(P)-binding Rossmann-fold domains"/>
    <property type="match status" value="1"/>
</dbReference>
<name>LCDH_PSEU2</name>
<organism>
    <name type="scientific">Pseudomonas syringae pv. syringae (strain B728a)</name>
    <dbReference type="NCBI Taxonomy" id="205918"/>
    <lineage>
        <taxon>Bacteria</taxon>
        <taxon>Pseudomonadati</taxon>
        <taxon>Pseudomonadota</taxon>
        <taxon>Gammaproteobacteria</taxon>
        <taxon>Pseudomonadales</taxon>
        <taxon>Pseudomonadaceae</taxon>
        <taxon>Pseudomonas</taxon>
        <taxon>Pseudomonas syringae</taxon>
    </lineage>
</organism>
<reference key="1">
    <citation type="journal article" date="2005" name="Proc. Natl. Acad. Sci. U.S.A.">
        <title>Comparison of the complete genome sequences of Pseudomonas syringae pv. syringae B728a and pv. tomato DC3000.</title>
        <authorList>
            <person name="Feil H."/>
            <person name="Feil W.S."/>
            <person name="Chain P."/>
            <person name="Larimer F."/>
            <person name="Dibartolo G."/>
            <person name="Copeland A."/>
            <person name="Lykidis A."/>
            <person name="Trong S."/>
            <person name="Nolan M."/>
            <person name="Goltsman E."/>
            <person name="Thiel J."/>
            <person name="Malfatti S."/>
            <person name="Loper J.E."/>
            <person name="Lapidus A."/>
            <person name="Detter J.C."/>
            <person name="Land M."/>
            <person name="Richardson P.M."/>
            <person name="Kyrpides N.C."/>
            <person name="Ivanova N."/>
            <person name="Lindow S.E."/>
        </authorList>
    </citation>
    <scope>NUCLEOTIDE SEQUENCE [LARGE SCALE GENOMIC DNA]</scope>
    <source>
        <strain>B728a</strain>
    </source>
</reference>
<sequence>MSFITEIKTFAALGSGVIGSGWVSRALAHGLDVVAWDPAPGAEAALRNRVAKCWGALEQQGLVPGASQNRLRFVATVEECVRDADFIQESAPERLELKLDLHSRISAAARSNVLIGSSTSGLLPSDVYESSAHPERCVVGHPFNPVYLLPLVEVVGGKNTAPAAIQAAIKVYESLGMRPLHVRKEVPGFIADRLLEALWREALHLVNDGVATTGEIDDAIRFGAGLRWSFMGTFLTYTLAGGEAGMRHFMTQFGPALQLPWTYLPAPELTDKLIDDVVDGTTDQLGKHSISGLERYRDDCLLAVLEAVKTTKARHGMA</sequence>
<feature type="chain" id="PRO_0000417903" description="L-carnitine dehydrogenase">
    <location>
        <begin position="1"/>
        <end position="318"/>
    </location>
</feature>
<feature type="binding site" evidence="1">
    <location>
        <begin position="14"/>
        <end position="19"/>
    </location>
    <ligand>
        <name>NAD(+)</name>
        <dbReference type="ChEBI" id="CHEBI:57540"/>
    </ligand>
</feature>